<name>LONM_MOUSE</name>
<sequence>MAASTGYVRLWAAARCWVLRRPLLAVTGGRVPSASGSWLRRGCRACDMSAPWGGRVLPGGVQWRGLWDSGNRGGSDETSEGGAEDGATASTGEGPVVTALAPMTVPDVFPHLPLIAITRNPVFPRFIKIVEVKNKKLVELLRRKVRLAQPYVGVFLKRDDNNESDVVESLDEIYHTGTFAQIHEMQDLGDKLRMIVTGHRRIHISRQLEVEPEGLEPEAEKQKSRRKLKRGKKEVEDELGPKPQLEMVTEAATDTSKEVLMVEVENVAHEDFQVTEEVKALTAEIVKTIRDIIALNPLYRESVLQMMQAGQRVVDNPIYLSDMGAALTGAESHELQDVLEETNILKRLYKALSLLKKEFELSKLQQRLGREVEEKIKQTHRKYLLQEQLKIIKKELGLEKDDKDAIEEKFRERLRELVVPKHVMDVVDEELSKLALLDNHSSEFNVTRNYLDWLTSIPWGRQSDENLDLARAQAVLEEDHYGMEDVKKRVLEFIAVSQLRGSTQGKILCFHGPPGVGKTSIARSIARALGREYFRFSVGGMTDVAEIKGHRRTYVGAMPGKIIQCLKKTKTENPLVLIDEVDKIGRGYQGDPSSALLELLDPEQNANFLDHYLDVPVDLSKVLFICTANVIDTIPEPLRDRMEMINVSGYVAQEKLAIAERYLVPQARTLCGLDESKAQLSAAVLTLLIKQYCRESGVRNLQKQVEKVLRKAAYKIVSGEAQTVQVTPENLQDFVGKPVFTVERMYEVTPPGVVMGLAWTAMGGSTLFVETSLRRPQPSGSKEDKDGSLEVTGQLGDVMKESARIAYTYARAFLMEQDPENDFLVTSHIHLHVPEGATPKDGPSAGCTIVTALLSLALGQPVLQNLAMTGEVSLTGKVLPVGGIKEKTIAAKRAGVTCIILPAENRKDYSDLAPFITEGLEVHFVEHYRDIFPIAFPRREHREALAVER</sequence>
<evidence type="ECO:0000255" key="1">
    <source>
        <dbReference type="HAMAP-Rule" id="MF_03120"/>
    </source>
</evidence>
<evidence type="ECO:0000255" key="2">
    <source>
        <dbReference type="PROSITE-ProRule" id="PRU01122"/>
    </source>
</evidence>
<evidence type="ECO:0000255" key="3">
    <source>
        <dbReference type="PROSITE-ProRule" id="PRU01123"/>
    </source>
</evidence>
<evidence type="ECO:0000256" key="4">
    <source>
        <dbReference type="SAM" id="MobiDB-lite"/>
    </source>
</evidence>
<evidence type="ECO:0000269" key="5">
    <source>
    </source>
</evidence>
<evidence type="ECO:0000305" key="6"/>
<reference key="1">
    <citation type="journal article" date="2003" name="Gene">
        <title>The ATP-dependent Lon protease of Mus musculus is a DNA-binding protein that is functionally conserved between yeast and mammals.</title>
        <authorList>
            <person name="Lu B."/>
            <person name="Liu T."/>
            <person name="Crosby J.A."/>
            <person name="Thomas-Wohlever J."/>
            <person name="Lee I."/>
            <person name="Suzuki C.K."/>
        </authorList>
    </citation>
    <scope>NUCLEOTIDE SEQUENCE [MRNA]</scope>
    <scope>FUNCTION</scope>
    <scope>DNA-BINDING</scope>
    <scope>SUBCELLULAR LOCATION</scope>
    <scope>TISSUE SPECIFICITY</scope>
    <source>
        <strain>BALB/cJ</strain>
        <tissue>Kidney</tissue>
    </source>
</reference>
<reference key="2">
    <citation type="journal article" date="2005" name="Science">
        <title>The transcriptional landscape of the mammalian genome.</title>
        <authorList>
            <person name="Carninci P."/>
            <person name="Kasukawa T."/>
            <person name="Katayama S."/>
            <person name="Gough J."/>
            <person name="Frith M.C."/>
            <person name="Maeda N."/>
            <person name="Oyama R."/>
            <person name="Ravasi T."/>
            <person name="Lenhard B."/>
            <person name="Wells C."/>
            <person name="Kodzius R."/>
            <person name="Shimokawa K."/>
            <person name="Bajic V.B."/>
            <person name="Brenner S.E."/>
            <person name="Batalov S."/>
            <person name="Forrest A.R."/>
            <person name="Zavolan M."/>
            <person name="Davis M.J."/>
            <person name="Wilming L.G."/>
            <person name="Aidinis V."/>
            <person name="Allen J.E."/>
            <person name="Ambesi-Impiombato A."/>
            <person name="Apweiler R."/>
            <person name="Aturaliya R.N."/>
            <person name="Bailey T.L."/>
            <person name="Bansal M."/>
            <person name="Baxter L."/>
            <person name="Beisel K.W."/>
            <person name="Bersano T."/>
            <person name="Bono H."/>
            <person name="Chalk A.M."/>
            <person name="Chiu K.P."/>
            <person name="Choudhary V."/>
            <person name="Christoffels A."/>
            <person name="Clutterbuck D.R."/>
            <person name="Crowe M.L."/>
            <person name="Dalla E."/>
            <person name="Dalrymple B.P."/>
            <person name="de Bono B."/>
            <person name="Della Gatta G."/>
            <person name="di Bernardo D."/>
            <person name="Down T."/>
            <person name="Engstrom P."/>
            <person name="Fagiolini M."/>
            <person name="Faulkner G."/>
            <person name="Fletcher C.F."/>
            <person name="Fukushima T."/>
            <person name="Furuno M."/>
            <person name="Futaki S."/>
            <person name="Gariboldi M."/>
            <person name="Georgii-Hemming P."/>
            <person name="Gingeras T.R."/>
            <person name="Gojobori T."/>
            <person name="Green R.E."/>
            <person name="Gustincich S."/>
            <person name="Harbers M."/>
            <person name="Hayashi Y."/>
            <person name="Hensch T.K."/>
            <person name="Hirokawa N."/>
            <person name="Hill D."/>
            <person name="Huminiecki L."/>
            <person name="Iacono M."/>
            <person name="Ikeo K."/>
            <person name="Iwama A."/>
            <person name="Ishikawa T."/>
            <person name="Jakt M."/>
            <person name="Kanapin A."/>
            <person name="Katoh M."/>
            <person name="Kawasawa Y."/>
            <person name="Kelso J."/>
            <person name="Kitamura H."/>
            <person name="Kitano H."/>
            <person name="Kollias G."/>
            <person name="Krishnan S.P."/>
            <person name="Kruger A."/>
            <person name="Kummerfeld S.K."/>
            <person name="Kurochkin I.V."/>
            <person name="Lareau L.F."/>
            <person name="Lazarevic D."/>
            <person name="Lipovich L."/>
            <person name="Liu J."/>
            <person name="Liuni S."/>
            <person name="McWilliam S."/>
            <person name="Madan Babu M."/>
            <person name="Madera M."/>
            <person name="Marchionni L."/>
            <person name="Matsuda H."/>
            <person name="Matsuzawa S."/>
            <person name="Miki H."/>
            <person name="Mignone F."/>
            <person name="Miyake S."/>
            <person name="Morris K."/>
            <person name="Mottagui-Tabar S."/>
            <person name="Mulder N."/>
            <person name="Nakano N."/>
            <person name="Nakauchi H."/>
            <person name="Ng P."/>
            <person name="Nilsson R."/>
            <person name="Nishiguchi S."/>
            <person name="Nishikawa S."/>
            <person name="Nori F."/>
            <person name="Ohara O."/>
            <person name="Okazaki Y."/>
            <person name="Orlando V."/>
            <person name="Pang K.C."/>
            <person name="Pavan W.J."/>
            <person name="Pavesi G."/>
            <person name="Pesole G."/>
            <person name="Petrovsky N."/>
            <person name="Piazza S."/>
            <person name="Reed J."/>
            <person name="Reid J.F."/>
            <person name="Ring B.Z."/>
            <person name="Ringwald M."/>
            <person name="Rost B."/>
            <person name="Ruan Y."/>
            <person name="Salzberg S.L."/>
            <person name="Sandelin A."/>
            <person name="Schneider C."/>
            <person name="Schoenbach C."/>
            <person name="Sekiguchi K."/>
            <person name="Semple C.A."/>
            <person name="Seno S."/>
            <person name="Sessa L."/>
            <person name="Sheng Y."/>
            <person name="Shibata Y."/>
            <person name="Shimada H."/>
            <person name="Shimada K."/>
            <person name="Silva D."/>
            <person name="Sinclair B."/>
            <person name="Sperling S."/>
            <person name="Stupka E."/>
            <person name="Sugiura K."/>
            <person name="Sultana R."/>
            <person name="Takenaka Y."/>
            <person name="Taki K."/>
            <person name="Tammoja K."/>
            <person name="Tan S.L."/>
            <person name="Tang S."/>
            <person name="Taylor M.S."/>
            <person name="Tegner J."/>
            <person name="Teichmann S.A."/>
            <person name="Ueda H.R."/>
            <person name="van Nimwegen E."/>
            <person name="Verardo R."/>
            <person name="Wei C.L."/>
            <person name="Yagi K."/>
            <person name="Yamanishi H."/>
            <person name="Zabarovsky E."/>
            <person name="Zhu S."/>
            <person name="Zimmer A."/>
            <person name="Hide W."/>
            <person name="Bult C."/>
            <person name="Grimmond S.M."/>
            <person name="Teasdale R.D."/>
            <person name="Liu E.T."/>
            <person name="Brusic V."/>
            <person name="Quackenbush J."/>
            <person name="Wahlestedt C."/>
            <person name="Mattick J.S."/>
            <person name="Hume D.A."/>
            <person name="Kai C."/>
            <person name="Sasaki D."/>
            <person name="Tomaru Y."/>
            <person name="Fukuda S."/>
            <person name="Kanamori-Katayama M."/>
            <person name="Suzuki M."/>
            <person name="Aoki J."/>
            <person name="Arakawa T."/>
            <person name="Iida J."/>
            <person name="Imamura K."/>
            <person name="Itoh M."/>
            <person name="Kato T."/>
            <person name="Kawaji H."/>
            <person name="Kawagashira N."/>
            <person name="Kawashima T."/>
            <person name="Kojima M."/>
            <person name="Kondo S."/>
            <person name="Konno H."/>
            <person name="Nakano K."/>
            <person name="Ninomiya N."/>
            <person name="Nishio T."/>
            <person name="Okada M."/>
            <person name="Plessy C."/>
            <person name="Shibata K."/>
            <person name="Shiraki T."/>
            <person name="Suzuki S."/>
            <person name="Tagami M."/>
            <person name="Waki K."/>
            <person name="Watahiki A."/>
            <person name="Okamura-Oho Y."/>
            <person name="Suzuki H."/>
            <person name="Kawai J."/>
            <person name="Hayashizaki Y."/>
        </authorList>
    </citation>
    <scope>NUCLEOTIDE SEQUENCE [LARGE SCALE MRNA]</scope>
    <source>
        <strain>C57BL/6J</strain>
        <strain>NOD</strain>
        <tissue>Lung</tissue>
        <tissue>Ovary</tissue>
        <tissue>Spleen</tissue>
    </source>
</reference>
<reference key="3">
    <citation type="submission" date="2007-03" db="UniProtKB">
        <authorList>
            <person name="Lubec G."/>
            <person name="Klug S."/>
        </authorList>
    </citation>
    <scope>PROTEIN SEQUENCE OF 434-448; 490-500 AND 930-938</scope>
    <scope>IDENTIFICATION BY MASS SPECTROMETRY</scope>
    <source>
        <tissue>Hippocampus</tissue>
    </source>
</reference>
<reference key="4">
    <citation type="journal article" date="2010" name="Cell">
        <title>A tissue-specific atlas of mouse protein phosphorylation and expression.</title>
        <authorList>
            <person name="Huttlin E.L."/>
            <person name="Jedrychowski M.P."/>
            <person name="Elias J.E."/>
            <person name="Goswami T."/>
            <person name="Rad R."/>
            <person name="Beausoleil S.A."/>
            <person name="Villen J."/>
            <person name="Haas W."/>
            <person name="Sowa M.E."/>
            <person name="Gygi S.P."/>
        </authorList>
    </citation>
    <scope>IDENTIFICATION BY MASS SPECTROMETRY [LARGE SCALE ANALYSIS]</scope>
    <source>
        <tissue>Brain</tissue>
        <tissue>Brown adipose tissue</tissue>
        <tissue>Heart</tissue>
        <tissue>Kidney</tissue>
        <tissue>Liver</tissue>
        <tissue>Lung</tissue>
        <tissue>Pancreas</tissue>
        <tissue>Spleen</tissue>
        <tissue>Testis</tissue>
    </source>
</reference>
<proteinExistence type="evidence at protein level"/>
<dbReference type="EC" id="3.4.21.53" evidence="1"/>
<dbReference type="EMBL" id="AY190302">
    <property type="protein sequence ID" value="AAN85210.1"/>
    <property type="molecule type" value="mRNA"/>
</dbReference>
<dbReference type="EMBL" id="AK004820">
    <property type="protein sequence ID" value="BAB23591.1"/>
    <property type="molecule type" value="mRNA"/>
</dbReference>
<dbReference type="EMBL" id="AK157474">
    <property type="protein sequence ID" value="BAE34094.1"/>
    <property type="molecule type" value="mRNA"/>
</dbReference>
<dbReference type="EMBL" id="AK159302">
    <property type="protein sequence ID" value="BAE34972.1"/>
    <property type="molecule type" value="mRNA"/>
</dbReference>
<dbReference type="EMBL" id="AK160071">
    <property type="protein sequence ID" value="BAE35606.1"/>
    <property type="molecule type" value="mRNA"/>
</dbReference>
<dbReference type="EMBL" id="AK161983">
    <property type="protein sequence ID" value="BAE36666.1"/>
    <property type="molecule type" value="mRNA"/>
</dbReference>
<dbReference type="CCDS" id="CCDS28910.1"/>
<dbReference type="RefSeq" id="NP_083058.2">
    <property type="nucleotide sequence ID" value="NM_028782.2"/>
</dbReference>
<dbReference type="SMR" id="Q8CGK3"/>
<dbReference type="BioGRID" id="216521">
    <property type="interactions" value="28"/>
</dbReference>
<dbReference type="FunCoup" id="Q8CGK3">
    <property type="interactions" value="2669"/>
</dbReference>
<dbReference type="IntAct" id="Q8CGK3">
    <property type="interactions" value="3"/>
</dbReference>
<dbReference type="MINT" id="Q8CGK3"/>
<dbReference type="STRING" id="10090.ENSMUSP00000041814"/>
<dbReference type="ChEMBL" id="CHEMBL3259486"/>
<dbReference type="MEROPS" id="S16.002"/>
<dbReference type="GlyGen" id="Q8CGK3">
    <property type="glycosylation" value="2 sites, 1 O-linked glycan (2 sites)"/>
</dbReference>
<dbReference type="iPTMnet" id="Q8CGK3"/>
<dbReference type="MetOSite" id="Q8CGK3"/>
<dbReference type="PhosphoSitePlus" id="Q8CGK3"/>
<dbReference type="SwissPalm" id="Q8CGK3"/>
<dbReference type="REPRODUCTION-2DPAGE" id="Q8CGK3"/>
<dbReference type="REPRODUCTION-2DPAGE" id="Q9DBP9"/>
<dbReference type="jPOST" id="Q8CGK3"/>
<dbReference type="PaxDb" id="10090-ENSMUSP00000041814"/>
<dbReference type="PeptideAtlas" id="Q8CGK3"/>
<dbReference type="ProteomicsDB" id="286228"/>
<dbReference type="Pumba" id="Q8CGK3"/>
<dbReference type="Antibodypedia" id="811">
    <property type="antibodies" value="299 antibodies from 30 providers"/>
</dbReference>
<dbReference type="DNASU" id="74142"/>
<dbReference type="Ensembl" id="ENSMUST00000047226.10">
    <property type="protein sequence ID" value="ENSMUSP00000041814.9"/>
    <property type="gene ID" value="ENSMUSG00000041168.11"/>
</dbReference>
<dbReference type="GeneID" id="74142"/>
<dbReference type="KEGG" id="mmu:74142"/>
<dbReference type="UCSC" id="uc008dcp.2">
    <property type="organism name" value="mouse"/>
</dbReference>
<dbReference type="AGR" id="MGI:1921392"/>
<dbReference type="CTD" id="9361"/>
<dbReference type="MGI" id="MGI:1921392">
    <property type="gene designation" value="Lonp1"/>
</dbReference>
<dbReference type="VEuPathDB" id="HostDB:ENSMUSG00000041168"/>
<dbReference type="eggNOG" id="KOG2004">
    <property type="taxonomic scope" value="Eukaryota"/>
</dbReference>
<dbReference type="GeneTree" id="ENSGT00530000063553"/>
<dbReference type="HOGENOM" id="CLU_004109_1_1_1"/>
<dbReference type="InParanoid" id="Q8CGK3"/>
<dbReference type="OMA" id="WLTNIPW"/>
<dbReference type="OrthoDB" id="2411602at2759"/>
<dbReference type="PhylomeDB" id="Q8CGK3"/>
<dbReference type="TreeFam" id="TF105001"/>
<dbReference type="BRENDA" id="3.4.21.53">
    <property type="organism ID" value="3474"/>
</dbReference>
<dbReference type="Reactome" id="R-MMU-9837999">
    <property type="pathway name" value="Mitochondrial protein degradation"/>
</dbReference>
<dbReference type="BioGRID-ORCS" id="74142">
    <property type="hits" value="25 hits in 81 CRISPR screens"/>
</dbReference>
<dbReference type="ChiTaRS" id="Lonp1">
    <property type="organism name" value="mouse"/>
</dbReference>
<dbReference type="PRO" id="PR:Q8CGK3"/>
<dbReference type="Proteomes" id="UP000000589">
    <property type="component" value="Chromosome 17"/>
</dbReference>
<dbReference type="RNAct" id="Q8CGK3">
    <property type="molecule type" value="protein"/>
</dbReference>
<dbReference type="Bgee" id="ENSMUSG00000041168">
    <property type="expression patterns" value="Expressed in adrenal medulla and 272 other cell types or tissues"/>
</dbReference>
<dbReference type="ExpressionAtlas" id="Q8CGK3">
    <property type="expression patterns" value="baseline and differential"/>
</dbReference>
<dbReference type="GO" id="GO:0005829">
    <property type="term" value="C:cytosol"/>
    <property type="evidence" value="ECO:0007669"/>
    <property type="project" value="Ensembl"/>
</dbReference>
<dbReference type="GO" id="GO:0042645">
    <property type="term" value="C:mitochondrial nucleoid"/>
    <property type="evidence" value="ECO:0007669"/>
    <property type="project" value="Ensembl"/>
</dbReference>
<dbReference type="GO" id="GO:0005739">
    <property type="term" value="C:mitochondrion"/>
    <property type="evidence" value="ECO:0000314"/>
    <property type="project" value="MGI"/>
</dbReference>
<dbReference type="GO" id="GO:0005654">
    <property type="term" value="C:nucleoplasm"/>
    <property type="evidence" value="ECO:0007669"/>
    <property type="project" value="Ensembl"/>
</dbReference>
<dbReference type="GO" id="GO:0043531">
    <property type="term" value="F:ADP binding"/>
    <property type="evidence" value="ECO:0007669"/>
    <property type="project" value="Ensembl"/>
</dbReference>
<dbReference type="GO" id="GO:0005524">
    <property type="term" value="F:ATP binding"/>
    <property type="evidence" value="ECO:0007669"/>
    <property type="project" value="UniProtKB-UniRule"/>
</dbReference>
<dbReference type="GO" id="GO:0016887">
    <property type="term" value="F:ATP hydrolysis activity"/>
    <property type="evidence" value="ECO:0000314"/>
    <property type="project" value="MGI"/>
</dbReference>
<dbReference type="GO" id="GO:0004176">
    <property type="term" value="F:ATP-dependent peptidase activity"/>
    <property type="evidence" value="ECO:0000314"/>
    <property type="project" value="MGI"/>
</dbReference>
<dbReference type="GO" id="GO:0070182">
    <property type="term" value="F:DNA polymerase binding"/>
    <property type="evidence" value="ECO:0007669"/>
    <property type="project" value="Ensembl"/>
</dbReference>
<dbReference type="GO" id="GO:0051880">
    <property type="term" value="F:G-quadruplex DNA binding"/>
    <property type="evidence" value="ECO:0007669"/>
    <property type="project" value="Ensembl"/>
</dbReference>
<dbReference type="GO" id="GO:0042802">
    <property type="term" value="F:identical protein binding"/>
    <property type="evidence" value="ECO:0007669"/>
    <property type="project" value="Ensembl"/>
</dbReference>
<dbReference type="GO" id="GO:0043560">
    <property type="term" value="F:insulin receptor substrate binding"/>
    <property type="evidence" value="ECO:0000353"/>
    <property type="project" value="MGI"/>
</dbReference>
<dbReference type="GO" id="GO:0001018">
    <property type="term" value="F:mitochondrial promoter sequence-specific DNA binding"/>
    <property type="evidence" value="ECO:0000314"/>
    <property type="project" value="MGI"/>
</dbReference>
<dbReference type="GO" id="GO:0042731">
    <property type="term" value="F:PH domain binding"/>
    <property type="evidence" value="ECO:0000353"/>
    <property type="project" value="MGI"/>
</dbReference>
<dbReference type="GO" id="GO:0004252">
    <property type="term" value="F:serine-type endopeptidase activity"/>
    <property type="evidence" value="ECO:0007669"/>
    <property type="project" value="UniProtKB-UniRule"/>
</dbReference>
<dbReference type="GO" id="GO:0003697">
    <property type="term" value="F:single-stranded DNA binding"/>
    <property type="evidence" value="ECO:0000314"/>
    <property type="project" value="MGI"/>
</dbReference>
<dbReference type="GO" id="GO:0003727">
    <property type="term" value="F:single-stranded RNA binding"/>
    <property type="evidence" value="ECO:0007669"/>
    <property type="project" value="Ensembl"/>
</dbReference>
<dbReference type="GO" id="GO:0034599">
    <property type="term" value="P:cellular response to oxidative stress"/>
    <property type="evidence" value="ECO:0007669"/>
    <property type="project" value="UniProtKB-UniRule"/>
</dbReference>
<dbReference type="GO" id="GO:0051131">
    <property type="term" value="P:chaperone-mediated protein complex assembly"/>
    <property type="evidence" value="ECO:0007669"/>
    <property type="project" value="UniProtKB-UniRule"/>
</dbReference>
<dbReference type="GO" id="GO:0007005">
    <property type="term" value="P:mitochondrion organization"/>
    <property type="evidence" value="ECO:0007669"/>
    <property type="project" value="Ensembl"/>
</dbReference>
<dbReference type="GO" id="GO:0046627">
    <property type="term" value="P:negative regulation of insulin receptor signaling pathway"/>
    <property type="evidence" value="ECO:0000314"/>
    <property type="project" value="MGI"/>
</dbReference>
<dbReference type="GO" id="GO:0070407">
    <property type="term" value="P:oxidation-dependent protein catabolic process"/>
    <property type="evidence" value="ECO:0007669"/>
    <property type="project" value="UniProtKB-UniRule"/>
</dbReference>
<dbReference type="GO" id="GO:0030163">
    <property type="term" value="P:protein catabolic process"/>
    <property type="evidence" value="ECO:0000250"/>
    <property type="project" value="UniProtKB"/>
</dbReference>
<dbReference type="GO" id="GO:0006515">
    <property type="term" value="P:protein quality control for misfolded or incompletely synthesized proteins"/>
    <property type="evidence" value="ECO:0007669"/>
    <property type="project" value="UniProtKB-UniRule"/>
</dbReference>
<dbReference type="GO" id="GO:0006508">
    <property type="term" value="P:proteolysis"/>
    <property type="evidence" value="ECO:0000314"/>
    <property type="project" value="MGI"/>
</dbReference>
<dbReference type="GO" id="GO:0010044">
    <property type="term" value="P:response to aluminum ion"/>
    <property type="evidence" value="ECO:0007669"/>
    <property type="project" value="Ensembl"/>
</dbReference>
<dbReference type="GO" id="GO:0009725">
    <property type="term" value="P:response to hormone"/>
    <property type="evidence" value="ECO:0007669"/>
    <property type="project" value="Ensembl"/>
</dbReference>
<dbReference type="GO" id="GO:0001666">
    <property type="term" value="P:response to hypoxia"/>
    <property type="evidence" value="ECO:0007669"/>
    <property type="project" value="Ensembl"/>
</dbReference>
<dbReference type="CDD" id="cd19500">
    <property type="entry name" value="RecA-like_Lon"/>
    <property type="match status" value="1"/>
</dbReference>
<dbReference type="FunFam" id="3.40.50.300:FF:000021">
    <property type="entry name" value="Lon protease homolog"/>
    <property type="match status" value="1"/>
</dbReference>
<dbReference type="FunFam" id="1.10.8.60:FF:000043">
    <property type="entry name" value="Lon protease homolog, mitochondrial"/>
    <property type="match status" value="1"/>
</dbReference>
<dbReference type="FunFam" id="1.20.5.5270:FF:000001">
    <property type="entry name" value="Lon protease homolog, mitochondrial"/>
    <property type="match status" value="1"/>
</dbReference>
<dbReference type="FunFam" id="1.20.58.1480:FF:000002">
    <property type="entry name" value="Lon protease homolog, mitochondrial"/>
    <property type="match status" value="1"/>
</dbReference>
<dbReference type="FunFam" id="2.30.130.40:FF:000004">
    <property type="entry name" value="Lon protease homolog, mitochondrial"/>
    <property type="match status" value="1"/>
</dbReference>
<dbReference type="FunFam" id="3.30.230.10:FF:000015">
    <property type="entry name" value="Lon protease homolog, mitochondrial"/>
    <property type="match status" value="1"/>
</dbReference>
<dbReference type="Gene3D" id="1.10.8.60">
    <property type="match status" value="1"/>
</dbReference>
<dbReference type="Gene3D" id="1.20.5.5270">
    <property type="match status" value="1"/>
</dbReference>
<dbReference type="Gene3D" id="1.20.58.1480">
    <property type="match status" value="1"/>
</dbReference>
<dbReference type="Gene3D" id="3.30.230.10">
    <property type="match status" value="1"/>
</dbReference>
<dbReference type="Gene3D" id="2.30.130.40">
    <property type="entry name" value="LON domain-like"/>
    <property type="match status" value="1"/>
</dbReference>
<dbReference type="Gene3D" id="3.40.50.300">
    <property type="entry name" value="P-loop containing nucleotide triphosphate hydrolases"/>
    <property type="match status" value="1"/>
</dbReference>
<dbReference type="HAMAP" id="MF_03120">
    <property type="entry name" value="lonm_euk"/>
    <property type="match status" value="1"/>
</dbReference>
<dbReference type="InterPro" id="IPR003593">
    <property type="entry name" value="AAA+_ATPase"/>
</dbReference>
<dbReference type="InterPro" id="IPR003959">
    <property type="entry name" value="ATPase_AAA_core"/>
</dbReference>
<dbReference type="InterPro" id="IPR004815">
    <property type="entry name" value="Lon_bac/euk-typ"/>
</dbReference>
<dbReference type="InterPro" id="IPR054594">
    <property type="entry name" value="Lon_lid"/>
</dbReference>
<dbReference type="InterPro" id="IPR008269">
    <property type="entry name" value="Lon_proteolytic"/>
</dbReference>
<dbReference type="InterPro" id="IPR027065">
    <property type="entry name" value="Lon_Prtase"/>
</dbReference>
<dbReference type="InterPro" id="IPR003111">
    <property type="entry name" value="Lon_prtase_N"/>
</dbReference>
<dbReference type="InterPro" id="IPR046336">
    <property type="entry name" value="Lon_prtase_N_sf"/>
</dbReference>
<dbReference type="InterPro" id="IPR027503">
    <property type="entry name" value="Lonm_euk"/>
</dbReference>
<dbReference type="InterPro" id="IPR027417">
    <property type="entry name" value="P-loop_NTPase"/>
</dbReference>
<dbReference type="InterPro" id="IPR008268">
    <property type="entry name" value="Peptidase_S16_AS"/>
</dbReference>
<dbReference type="InterPro" id="IPR015947">
    <property type="entry name" value="PUA-like_sf"/>
</dbReference>
<dbReference type="InterPro" id="IPR020568">
    <property type="entry name" value="Ribosomal_Su5_D2-typ_SF"/>
</dbReference>
<dbReference type="InterPro" id="IPR014721">
    <property type="entry name" value="Ribsml_uS5_D2-typ_fold_subgr"/>
</dbReference>
<dbReference type="NCBIfam" id="TIGR00763">
    <property type="entry name" value="lon"/>
    <property type="match status" value="1"/>
</dbReference>
<dbReference type="PANTHER" id="PTHR43718">
    <property type="entry name" value="LON PROTEASE"/>
    <property type="match status" value="1"/>
</dbReference>
<dbReference type="PANTHER" id="PTHR43718:SF2">
    <property type="entry name" value="LON PROTEASE HOMOLOG, MITOCHONDRIAL"/>
    <property type="match status" value="1"/>
</dbReference>
<dbReference type="Pfam" id="PF00004">
    <property type="entry name" value="AAA"/>
    <property type="match status" value="1"/>
</dbReference>
<dbReference type="Pfam" id="PF05362">
    <property type="entry name" value="Lon_C"/>
    <property type="match status" value="1"/>
</dbReference>
<dbReference type="Pfam" id="PF22667">
    <property type="entry name" value="Lon_lid"/>
    <property type="match status" value="1"/>
</dbReference>
<dbReference type="Pfam" id="PF02190">
    <property type="entry name" value="LON_substr_bdg"/>
    <property type="match status" value="1"/>
</dbReference>
<dbReference type="PIRSF" id="PIRSF001174">
    <property type="entry name" value="Lon_proteas"/>
    <property type="match status" value="1"/>
</dbReference>
<dbReference type="PRINTS" id="PR00830">
    <property type="entry name" value="ENDOLAPTASE"/>
</dbReference>
<dbReference type="SMART" id="SM00382">
    <property type="entry name" value="AAA"/>
    <property type="match status" value="1"/>
</dbReference>
<dbReference type="SMART" id="SM00464">
    <property type="entry name" value="LON"/>
    <property type="match status" value="1"/>
</dbReference>
<dbReference type="SUPFAM" id="SSF52540">
    <property type="entry name" value="P-loop containing nucleoside triphosphate hydrolases"/>
    <property type="match status" value="1"/>
</dbReference>
<dbReference type="SUPFAM" id="SSF88697">
    <property type="entry name" value="PUA domain-like"/>
    <property type="match status" value="1"/>
</dbReference>
<dbReference type="SUPFAM" id="SSF54211">
    <property type="entry name" value="Ribosomal protein S5 domain 2-like"/>
    <property type="match status" value="1"/>
</dbReference>
<dbReference type="PROSITE" id="PS51787">
    <property type="entry name" value="LON_N"/>
    <property type="match status" value="1"/>
</dbReference>
<dbReference type="PROSITE" id="PS51786">
    <property type="entry name" value="LON_PROTEOLYTIC"/>
    <property type="match status" value="1"/>
</dbReference>
<dbReference type="PROSITE" id="PS01046">
    <property type="entry name" value="LON_SER"/>
    <property type="match status" value="1"/>
</dbReference>
<feature type="transit peptide" description="Mitochondrion" evidence="1">
    <location>
        <begin position="1"/>
        <end position="65"/>
    </location>
</feature>
<feature type="chain" id="PRO_0000254961" description="Lon protease homolog, mitochondrial">
    <location>
        <begin position="66"/>
        <end position="949"/>
    </location>
</feature>
<feature type="domain" description="Lon N-terminal" evidence="3">
    <location>
        <begin position="112"/>
        <end position="359"/>
    </location>
</feature>
<feature type="domain" description="Lon proteolytic" evidence="2">
    <location>
        <begin position="748"/>
        <end position="938"/>
    </location>
</feature>
<feature type="region of interest" description="Disordered" evidence="4">
    <location>
        <begin position="68"/>
        <end position="94"/>
    </location>
</feature>
<feature type="region of interest" description="Disordered" evidence="4">
    <location>
        <begin position="213"/>
        <end position="240"/>
    </location>
</feature>
<feature type="compositionally biased region" description="Basic residues" evidence="4">
    <location>
        <begin position="223"/>
        <end position="232"/>
    </location>
</feature>
<feature type="active site" evidence="1">
    <location>
        <position position="844"/>
    </location>
</feature>
<feature type="active site" evidence="1">
    <location>
        <position position="887"/>
    </location>
</feature>
<feature type="binding site" evidence="1">
    <location>
        <begin position="512"/>
        <end position="519"/>
    </location>
    <ligand>
        <name>ATP</name>
        <dbReference type="ChEBI" id="CHEBI:30616"/>
    </ligand>
</feature>
<feature type="sequence conflict" description="In Ref. 2; BAB23591." evidence="6" ref="2">
    <original>S</original>
    <variation>G</variation>
    <location>
        <position position="90"/>
    </location>
</feature>
<feature type="sequence conflict" description="In Ref. 2; BAE34094." evidence="6" ref="2">
    <original>A</original>
    <variation>T</variation>
    <location>
        <position position="99"/>
    </location>
</feature>
<feature type="sequence conflict" description="In Ref. 2; BAB23591." evidence="6" ref="2">
    <original>I</original>
    <variation>T</variation>
    <location>
        <position position="202"/>
    </location>
</feature>
<feature type="sequence conflict" description="In Ref. 1; AAN85210." evidence="6" ref="1">
    <original>G</original>
    <variation>R</variation>
    <location>
        <position position="214"/>
    </location>
</feature>
<feature type="sequence conflict" description="In Ref. 2; BAE34094." evidence="6" ref="2">
    <original>G</original>
    <variation>S</variation>
    <location>
        <position position="240"/>
    </location>
</feature>
<feature type="sequence conflict" description="In Ref. 2; BAE34094." evidence="6" ref="2">
    <original>V</original>
    <variation>L</variation>
    <location>
        <position position="248"/>
    </location>
</feature>
<feature type="sequence conflict" description="In Ref. 2; BAB23591." evidence="6" ref="2">
    <original>D</original>
    <variation>Y</variation>
    <location>
        <position position="271"/>
    </location>
</feature>
<feature type="sequence conflict" description="In Ref. 2; BAB23591." evidence="6" ref="2">
    <original>L</original>
    <variation>P</variation>
    <location>
        <position position="368"/>
    </location>
</feature>
<feature type="sequence conflict" description="In Ref. 2; BAE36666." evidence="6" ref="2">
    <original>M</original>
    <variation>I</variation>
    <location>
        <position position="424"/>
    </location>
</feature>
<feature type="sequence conflict" description="In Ref. 2; BAE34972." evidence="6" ref="2">
    <original>N</original>
    <variation>K</variation>
    <location>
        <position position="449"/>
    </location>
</feature>
<feature type="sequence conflict" description="In Ref. 2; BAE34094." evidence="6" ref="2">
    <original>E</original>
    <variation>K</variation>
    <location>
        <position position="636"/>
    </location>
</feature>
<accession>Q8CGK3</accession>
<accession>Q3TSK9</accession>
<accession>Q3TVL2</accession>
<accession>Q3TXE4</accession>
<accession>Q3TZW3</accession>
<accession>Q9DBP9</accession>
<gene>
    <name type="primary">Lonp1</name>
    <name type="synonym">Prss15</name>
</gene>
<comment type="function">
    <text evidence="1 5">ATP-dependent serine protease that mediates the selective degradation of misfolded, unassembled or oxidatively damaged polypeptides as well as certain short-lived regulatory proteins in the mitochondrial matrix. Endogenous substrates include mitochondrial steroidogenic acute regulatory (StAR) protein, DELE1, helicase Twinkle (TWNK) and the large ribosomal subunit protein MRPL32/bL32m. MRPL32/bL32m is protected from degradation by LONP1 when it is bound to a nucleic acid (RNA), but TWNK is not. May also have a chaperone function in the assembly of inner membrane protein complexes. Participates in the regulation of mitochondrial gene expression and in the maintenance of the integrity of the mitochondrial genome. Binds to mitochondrial promoters and RNA in a single-stranded, site-specific, and strand-specific manner. May regulate mitochondrial DNA replication and/or gene expression using site-specific, single-stranded DNA binding to target the degradation of regulatory proteins binding to adjacent sites in mitochondrial promoters.</text>
</comment>
<comment type="catalytic activity">
    <reaction evidence="1">
        <text>Hydrolysis of proteins in presence of ATP.</text>
        <dbReference type="EC" id="3.4.21.53"/>
    </reaction>
</comment>
<comment type="subunit">
    <text evidence="1">Homohexamer. Organized in a ring with a central cavity. The ATP-binding and proteolytic domains (AP-domain) form a hexameric chamber, while the N-terminal domain is arranged as a trimer of dimers. DNA and RNA binding is stimulated by substrate and inhibited by ATP binding. Interacts with TWNK and mitochondrial DNA polymerase subunit POLG.</text>
</comment>
<comment type="subcellular location">
    <subcellularLocation>
        <location evidence="1 5">Mitochondrion matrix</location>
    </subcellularLocation>
</comment>
<comment type="tissue specificity">
    <text evidence="5">Detected in liver &gt; heart &gt; kidney &gt; testis.</text>
</comment>
<comment type="similarity">
    <text evidence="1">Belongs to the peptidase S16 family.</text>
</comment>
<organism>
    <name type="scientific">Mus musculus</name>
    <name type="common">Mouse</name>
    <dbReference type="NCBI Taxonomy" id="10090"/>
    <lineage>
        <taxon>Eukaryota</taxon>
        <taxon>Metazoa</taxon>
        <taxon>Chordata</taxon>
        <taxon>Craniata</taxon>
        <taxon>Vertebrata</taxon>
        <taxon>Euteleostomi</taxon>
        <taxon>Mammalia</taxon>
        <taxon>Eutheria</taxon>
        <taxon>Euarchontoglires</taxon>
        <taxon>Glires</taxon>
        <taxon>Rodentia</taxon>
        <taxon>Myomorpha</taxon>
        <taxon>Muroidea</taxon>
        <taxon>Muridae</taxon>
        <taxon>Murinae</taxon>
        <taxon>Mus</taxon>
        <taxon>Mus</taxon>
    </lineage>
</organism>
<protein>
    <recommendedName>
        <fullName evidence="1">Lon protease homolog, mitochondrial</fullName>
        <ecNumber evidence="1">3.4.21.53</ecNumber>
    </recommendedName>
    <alternativeName>
        <fullName evidence="1">Lon protease-like protein</fullName>
        <shortName evidence="1">LONP</shortName>
    </alternativeName>
    <alternativeName>
        <fullName evidence="1">Mitochondrial ATP-dependent protease Lon</fullName>
    </alternativeName>
    <alternativeName>
        <fullName evidence="1">Serine protease 15</fullName>
    </alternativeName>
</protein>
<keyword id="KW-0067">ATP-binding</keyword>
<keyword id="KW-0903">Direct protein sequencing</keyword>
<keyword id="KW-0238">DNA-binding</keyword>
<keyword id="KW-0378">Hydrolase</keyword>
<keyword id="KW-0496">Mitochondrion</keyword>
<keyword id="KW-0547">Nucleotide-binding</keyword>
<keyword id="KW-0645">Protease</keyword>
<keyword id="KW-1185">Reference proteome</keyword>
<keyword id="KW-0720">Serine protease</keyword>
<keyword id="KW-0809">Transit peptide</keyword>